<comment type="function">
    <text evidence="1">Catalyzes the isomerization of L-xylulose-5-phosphate to L-ribulose-5-phosphate. Is involved in the anaerobic L-ascorbate utilization.</text>
</comment>
<comment type="catalytic activity">
    <reaction evidence="1">
        <text>L-ribulose 5-phosphate = L-xylulose 5-phosphate</text>
        <dbReference type="Rhea" id="RHEA:18497"/>
        <dbReference type="ChEBI" id="CHEBI:57829"/>
        <dbReference type="ChEBI" id="CHEBI:58226"/>
        <dbReference type="EC" id="5.1.3.22"/>
    </reaction>
</comment>
<comment type="pathway">
    <text evidence="1">Cofactor degradation; L-ascorbate degradation; D-xylulose 5-phosphate from L-ascorbate: step 3/4.</text>
</comment>
<comment type="induction">
    <text evidence="1">Induced by L-ascorbate. Repressed by UlaR.</text>
</comment>
<comment type="similarity">
    <text evidence="1">Belongs to the L-ribulose-5-phosphate 3-epimerase family.</text>
</comment>
<reference key="1">
    <citation type="journal article" date="2006" name="Mol. Microbiol.">
        <title>Role of pathogenicity island-associated integrases in the genome plasticity of uropathogenic Escherichia coli strain 536.</title>
        <authorList>
            <person name="Hochhut B."/>
            <person name="Wilde C."/>
            <person name="Balling G."/>
            <person name="Middendorf B."/>
            <person name="Dobrindt U."/>
            <person name="Brzuszkiewicz E."/>
            <person name="Gottschalk G."/>
            <person name="Carniel E."/>
            <person name="Hacker J."/>
        </authorList>
    </citation>
    <scope>NUCLEOTIDE SEQUENCE [LARGE SCALE GENOMIC DNA]</scope>
    <source>
        <strain>536 / UPEC</strain>
    </source>
</reference>
<keyword id="KW-0413">Isomerase</keyword>
<evidence type="ECO:0000255" key="1">
    <source>
        <dbReference type="HAMAP-Rule" id="MF_01951"/>
    </source>
</evidence>
<gene>
    <name evidence="1" type="primary">ulaE</name>
    <name type="ordered locus">ECP_4442</name>
</gene>
<dbReference type="EC" id="5.1.3.22" evidence="1"/>
<dbReference type="EMBL" id="CP000247">
    <property type="protein sequence ID" value="ABG72383.1"/>
    <property type="molecule type" value="Genomic_DNA"/>
</dbReference>
<dbReference type="RefSeq" id="WP_000949498.1">
    <property type="nucleotide sequence ID" value="NC_008253.1"/>
</dbReference>
<dbReference type="SMR" id="Q0T9J6"/>
<dbReference type="GeneID" id="86861409"/>
<dbReference type="KEGG" id="ecp:ECP_4442"/>
<dbReference type="HOGENOM" id="CLU_082738_0_0_6"/>
<dbReference type="UniPathway" id="UPA00263">
    <property type="reaction ID" value="UER00379"/>
</dbReference>
<dbReference type="Proteomes" id="UP000009182">
    <property type="component" value="Chromosome"/>
</dbReference>
<dbReference type="GO" id="GO:0016861">
    <property type="term" value="F:intramolecular oxidoreductase activity, interconverting aldoses and ketoses"/>
    <property type="evidence" value="ECO:0007669"/>
    <property type="project" value="InterPro"/>
</dbReference>
<dbReference type="GO" id="GO:0034015">
    <property type="term" value="F:L-ribulose-5-phosphate 3-epimerase activity"/>
    <property type="evidence" value="ECO:0007669"/>
    <property type="project" value="UniProtKB-UniRule"/>
</dbReference>
<dbReference type="GO" id="GO:0019854">
    <property type="term" value="P:L-ascorbic acid catabolic process"/>
    <property type="evidence" value="ECO:0007669"/>
    <property type="project" value="UniProtKB-UniRule"/>
</dbReference>
<dbReference type="FunFam" id="3.20.20.150:FF:000003">
    <property type="entry name" value="L-ribulose-5-phosphate 3-epimerase UlaE"/>
    <property type="match status" value="1"/>
</dbReference>
<dbReference type="Gene3D" id="3.20.20.150">
    <property type="entry name" value="Divalent-metal-dependent TIM barrel enzymes"/>
    <property type="match status" value="1"/>
</dbReference>
<dbReference type="HAMAP" id="MF_01951">
    <property type="entry name" value="UlaE"/>
    <property type="match status" value="1"/>
</dbReference>
<dbReference type="InterPro" id="IPR004560">
    <property type="entry name" value="L-Ru-5P_3-Epase"/>
</dbReference>
<dbReference type="InterPro" id="IPR023492">
    <property type="entry name" value="L-Ru-5P_3-Epase_Enterobacteria"/>
</dbReference>
<dbReference type="InterPro" id="IPR050417">
    <property type="entry name" value="Sugar_Epim/Isomerase"/>
</dbReference>
<dbReference type="InterPro" id="IPR036237">
    <property type="entry name" value="Xyl_isomerase-like_sf"/>
</dbReference>
<dbReference type="InterPro" id="IPR013022">
    <property type="entry name" value="Xyl_isomerase-like_TIM-brl"/>
</dbReference>
<dbReference type="NCBIfam" id="TIGR00542">
    <property type="entry name" value="hxl6Piso_put"/>
    <property type="match status" value="1"/>
</dbReference>
<dbReference type="NCBIfam" id="NF009688">
    <property type="entry name" value="PRK13209.1"/>
    <property type="match status" value="1"/>
</dbReference>
<dbReference type="NCBIfam" id="NF009689">
    <property type="entry name" value="PRK13210.1"/>
    <property type="match status" value="1"/>
</dbReference>
<dbReference type="PANTHER" id="PTHR43489">
    <property type="entry name" value="ISOMERASE"/>
    <property type="match status" value="1"/>
</dbReference>
<dbReference type="PANTHER" id="PTHR43489:SF8">
    <property type="entry name" value="L-RIBULOSE-5-PHOSPHATE 3-EPIMERASE ULAE"/>
    <property type="match status" value="1"/>
</dbReference>
<dbReference type="Pfam" id="PF01261">
    <property type="entry name" value="AP_endonuc_2"/>
    <property type="match status" value="1"/>
</dbReference>
<dbReference type="SUPFAM" id="SSF51658">
    <property type="entry name" value="Xylose isomerase-like"/>
    <property type="match status" value="1"/>
</dbReference>
<protein>
    <recommendedName>
        <fullName evidence="1">L-ribulose-5-phosphate 3-epimerase UlaE</fullName>
        <ecNumber evidence="1">5.1.3.22</ecNumber>
    </recommendedName>
    <alternativeName>
        <fullName evidence="1">L-ascorbate utilization protein E</fullName>
    </alternativeName>
    <alternativeName>
        <fullName evidence="1">L-xylulose-5-phosphate 3-epimerase</fullName>
    </alternativeName>
</protein>
<organism>
    <name type="scientific">Escherichia coli O6:K15:H31 (strain 536 / UPEC)</name>
    <dbReference type="NCBI Taxonomy" id="362663"/>
    <lineage>
        <taxon>Bacteria</taxon>
        <taxon>Pseudomonadati</taxon>
        <taxon>Pseudomonadota</taxon>
        <taxon>Gammaproteobacteria</taxon>
        <taxon>Enterobacterales</taxon>
        <taxon>Enterobacteriaceae</taxon>
        <taxon>Escherichia</taxon>
    </lineage>
</organism>
<accession>Q0T9J6</accession>
<proteinExistence type="inferred from homology"/>
<name>ULAE_ECOL5</name>
<feature type="chain" id="PRO_1000070633" description="L-ribulose-5-phosphate 3-epimerase UlaE">
    <location>
        <begin position="1"/>
        <end position="284"/>
    </location>
</feature>
<sequence length="284" mass="32035">MLSKQIPLGIYEKALPAGECWLERLQLAKTLGFDFVEMSVDETDDRLSRLDWSREQRLALVNAIVETGVRVPSMCLSAHRRFPLGSEDDAVRAQGLEIMRKAIQFAQDVGIRVIQLAGYDVYYQEANNETRRRFRDGLKESVEMASRAQVTLAMEIMDYPLMNSISKALGYAHYLNNPWFQLYPDIGNLSAWDNDVQMELQAGIGHIVAVHVKDTKPGVFKNVPFGEGVVDFERCFETLKQSGYCGPYLIEMWSETAEDPAAEVAKARDWVKARMAKAGMVEAA</sequence>